<sequence length="338" mass="36777">MEKQTVAVLGPGSWGTALSQVLNDNGHEVRIWGNLPEQINEINTHHTNKHYFKDVVLDENIIAYTDLAETLKNVDAILFVVPTKVTRLVAQQVAQTLDHKVIIMHASKGLEPDSHKRLSTILEEEIPEHLRSDIVVVSGPSHAEETIVRDLTLITAASKDLQTAQYVQELFSNHYFRLYTNTDVIGVETAGALKNIIAVGAGALHGLGFGDNAKAAIIARGLAEITRLGVALGASPLTYSGLSGVGDLIVTGTSIHSRNWRAGDALGRGESLADIEANMGMVIEGISTTRAAYELAQELGVYMPITQAIYQVIYHGTNIKDAIYDIMNNEFKAENEWS</sequence>
<feature type="chain" id="PRO_1000049559" description="Glycerol-3-phosphate dehydrogenase [NAD(P)+]">
    <location>
        <begin position="1"/>
        <end position="338"/>
    </location>
</feature>
<feature type="active site" description="Proton acceptor" evidence="1">
    <location>
        <position position="194"/>
    </location>
</feature>
<feature type="binding site" evidence="1">
    <location>
        <position position="13"/>
    </location>
    <ligand>
        <name>NADPH</name>
        <dbReference type="ChEBI" id="CHEBI:57783"/>
    </ligand>
</feature>
<feature type="binding site" evidence="1">
    <location>
        <position position="14"/>
    </location>
    <ligand>
        <name>NADPH</name>
        <dbReference type="ChEBI" id="CHEBI:57783"/>
    </ligand>
</feature>
<feature type="binding site" evidence="1">
    <location>
        <position position="108"/>
    </location>
    <ligand>
        <name>NADPH</name>
        <dbReference type="ChEBI" id="CHEBI:57783"/>
    </ligand>
</feature>
<feature type="binding site" evidence="1">
    <location>
        <position position="108"/>
    </location>
    <ligand>
        <name>sn-glycerol 3-phosphate</name>
        <dbReference type="ChEBI" id="CHEBI:57597"/>
    </ligand>
</feature>
<feature type="binding site" evidence="1">
    <location>
        <position position="139"/>
    </location>
    <ligand>
        <name>sn-glycerol 3-phosphate</name>
        <dbReference type="ChEBI" id="CHEBI:57597"/>
    </ligand>
</feature>
<feature type="binding site" evidence="1">
    <location>
        <position position="141"/>
    </location>
    <ligand>
        <name>sn-glycerol 3-phosphate</name>
        <dbReference type="ChEBI" id="CHEBI:57597"/>
    </ligand>
</feature>
<feature type="binding site" evidence="1">
    <location>
        <position position="143"/>
    </location>
    <ligand>
        <name>NADPH</name>
        <dbReference type="ChEBI" id="CHEBI:57783"/>
    </ligand>
</feature>
<feature type="binding site" evidence="1">
    <location>
        <position position="194"/>
    </location>
    <ligand>
        <name>sn-glycerol 3-phosphate</name>
        <dbReference type="ChEBI" id="CHEBI:57597"/>
    </ligand>
</feature>
<feature type="binding site" evidence="1">
    <location>
        <position position="247"/>
    </location>
    <ligand>
        <name>sn-glycerol 3-phosphate</name>
        <dbReference type="ChEBI" id="CHEBI:57597"/>
    </ligand>
</feature>
<feature type="binding site" evidence="1">
    <location>
        <position position="257"/>
    </location>
    <ligand>
        <name>sn-glycerol 3-phosphate</name>
        <dbReference type="ChEBI" id="CHEBI:57597"/>
    </ligand>
</feature>
<feature type="binding site" evidence="1">
    <location>
        <position position="258"/>
    </location>
    <ligand>
        <name>NADPH</name>
        <dbReference type="ChEBI" id="CHEBI:57783"/>
    </ligand>
</feature>
<feature type="binding site" evidence="1">
    <location>
        <position position="258"/>
    </location>
    <ligand>
        <name>sn-glycerol 3-phosphate</name>
        <dbReference type="ChEBI" id="CHEBI:57597"/>
    </ligand>
</feature>
<feature type="binding site" evidence="1">
    <location>
        <position position="259"/>
    </location>
    <ligand>
        <name>sn-glycerol 3-phosphate</name>
        <dbReference type="ChEBI" id="CHEBI:57597"/>
    </ligand>
</feature>
<feature type="binding site" evidence="1">
    <location>
        <position position="282"/>
    </location>
    <ligand>
        <name>NADPH</name>
        <dbReference type="ChEBI" id="CHEBI:57783"/>
    </ligand>
</feature>
<feature type="binding site" evidence="1">
    <location>
        <position position="284"/>
    </location>
    <ligand>
        <name>NADPH</name>
        <dbReference type="ChEBI" id="CHEBI:57783"/>
    </ligand>
</feature>
<reference key="1">
    <citation type="journal article" date="2007" name="J. Bacteriol.">
        <title>Genome sequence of Avery's virulent serotype 2 strain D39 of Streptococcus pneumoniae and comparison with that of unencapsulated laboratory strain R6.</title>
        <authorList>
            <person name="Lanie J.A."/>
            <person name="Ng W.-L."/>
            <person name="Kazmierczak K.M."/>
            <person name="Andrzejewski T.M."/>
            <person name="Davidsen T.M."/>
            <person name="Wayne K.J."/>
            <person name="Tettelin H."/>
            <person name="Glass J.I."/>
            <person name="Winkler M.E."/>
        </authorList>
    </citation>
    <scope>NUCLEOTIDE SEQUENCE [LARGE SCALE GENOMIC DNA]</scope>
    <source>
        <strain>D39 / NCTC 7466</strain>
    </source>
</reference>
<proteinExistence type="inferred from homology"/>
<comment type="function">
    <text evidence="1">Catalyzes the reduction of the glycolytic intermediate dihydroxyacetone phosphate (DHAP) to sn-glycerol 3-phosphate (G3P), the key precursor for phospholipid synthesis.</text>
</comment>
<comment type="catalytic activity">
    <reaction evidence="1">
        <text>sn-glycerol 3-phosphate + NAD(+) = dihydroxyacetone phosphate + NADH + H(+)</text>
        <dbReference type="Rhea" id="RHEA:11092"/>
        <dbReference type="ChEBI" id="CHEBI:15378"/>
        <dbReference type="ChEBI" id="CHEBI:57540"/>
        <dbReference type="ChEBI" id="CHEBI:57597"/>
        <dbReference type="ChEBI" id="CHEBI:57642"/>
        <dbReference type="ChEBI" id="CHEBI:57945"/>
        <dbReference type="EC" id="1.1.1.94"/>
    </reaction>
    <physiologicalReaction direction="right-to-left" evidence="1">
        <dbReference type="Rhea" id="RHEA:11094"/>
    </physiologicalReaction>
</comment>
<comment type="catalytic activity">
    <reaction evidence="1">
        <text>sn-glycerol 3-phosphate + NADP(+) = dihydroxyacetone phosphate + NADPH + H(+)</text>
        <dbReference type="Rhea" id="RHEA:11096"/>
        <dbReference type="ChEBI" id="CHEBI:15378"/>
        <dbReference type="ChEBI" id="CHEBI:57597"/>
        <dbReference type="ChEBI" id="CHEBI:57642"/>
        <dbReference type="ChEBI" id="CHEBI:57783"/>
        <dbReference type="ChEBI" id="CHEBI:58349"/>
        <dbReference type="EC" id="1.1.1.94"/>
    </reaction>
    <physiologicalReaction direction="right-to-left" evidence="1">
        <dbReference type="Rhea" id="RHEA:11098"/>
    </physiologicalReaction>
</comment>
<comment type="pathway">
    <text evidence="1">Membrane lipid metabolism; glycerophospholipid metabolism.</text>
</comment>
<comment type="subcellular location">
    <subcellularLocation>
        <location evidence="1">Cytoplasm</location>
    </subcellularLocation>
</comment>
<comment type="similarity">
    <text evidence="1">Belongs to the NAD-dependent glycerol-3-phosphate dehydrogenase family.</text>
</comment>
<name>GPDA_STRP2</name>
<accession>Q04I82</accession>
<organism>
    <name type="scientific">Streptococcus pneumoniae serotype 2 (strain D39 / NCTC 7466)</name>
    <dbReference type="NCBI Taxonomy" id="373153"/>
    <lineage>
        <taxon>Bacteria</taxon>
        <taxon>Bacillati</taxon>
        <taxon>Bacillota</taxon>
        <taxon>Bacilli</taxon>
        <taxon>Lactobacillales</taxon>
        <taxon>Streptococcaceae</taxon>
        <taxon>Streptococcus</taxon>
    </lineage>
</organism>
<evidence type="ECO:0000255" key="1">
    <source>
        <dbReference type="HAMAP-Rule" id="MF_00394"/>
    </source>
</evidence>
<gene>
    <name evidence="1" type="primary">gpsA</name>
    <name type="ordered locus">SPD_1918</name>
</gene>
<protein>
    <recommendedName>
        <fullName evidence="1">Glycerol-3-phosphate dehydrogenase [NAD(P)+]</fullName>
        <ecNumber evidence="1">1.1.1.94</ecNumber>
    </recommendedName>
    <alternativeName>
        <fullName evidence="1">NAD(P)(+)-dependent glycerol-3-phosphate dehydrogenase</fullName>
    </alternativeName>
    <alternativeName>
        <fullName evidence="1">NAD(P)H-dependent dihydroxyacetone-phosphate reductase</fullName>
    </alternativeName>
</protein>
<keyword id="KW-0963">Cytoplasm</keyword>
<keyword id="KW-0444">Lipid biosynthesis</keyword>
<keyword id="KW-0443">Lipid metabolism</keyword>
<keyword id="KW-0520">NAD</keyword>
<keyword id="KW-0521">NADP</keyword>
<keyword id="KW-0547">Nucleotide-binding</keyword>
<keyword id="KW-0560">Oxidoreductase</keyword>
<keyword id="KW-0594">Phospholipid biosynthesis</keyword>
<keyword id="KW-1208">Phospholipid metabolism</keyword>
<keyword id="KW-1185">Reference proteome</keyword>
<dbReference type="EC" id="1.1.1.94" evidence="1"/>
<dbReference type="EMBL" id="CP000410">
    <property type="protein sequence ID" value="ABJ55291.1"/>
    <property type="molecule type" value="Genomic_DNA"/>
</dbReference>
<dbReference type="RefSeq" id="WP_000415108.1">
    <property type="nucleotide sequence ID" value="NZ_JAMLJR010000012.1"/>
</dbReference>
<dbReference type="SMR" id="Q04I82"/>
<dbReference type="PaxDb" id="373153-SPD_1918"/>
<dbReference type="KEGG" id="spd:SPD_1918"/>
<dbReference type="eggNOG" id="COG0240">
    <property type="taxonomic scope" value="Bacteria"/>
</dbReference>
<dbReference type="HOGENOM" id="CLU_033449_0_2_9"/>
<dbReference type="BioCyc" id="SPNE373153:G1G6V-2062-MONOMER"/>
<dbReference type="UniPathway" id="UPA00940"/>
<dbReference type="Proteomes" id="UP000001452">
    <property type="component" value="Chromosome"/>
</dbReference>
<dbReference type="GO" id="GO:0005829">
    <property type="term" value="C:cytosol"/>
    <property type="evidence" value="ECO:0007669"/>
    <property type="project" value="TreeGrafter"/>
</dbReference>
<dbReference type="GO" id="GO:0047952">
    <property type="term" value="F:glycerol-3-phosphate dehydrogenase [NAD(P)+] activity"/>
    <property type="evidence" value="ECO:0007669"/>
    <property type="project" value="UniProtKB-UniRule"/>
</dbReference>
<dbReference type="GO" id="GO:0051287">
    <property type="term" value="F:NAD binding"/>
    <property type="evidence" value="ECO:0007669"/>
    <property type="project" value="InterPro"/>
</dbReference>
<dbReference type="GO" id="GO:0005975">
    <property type="term" value="P:carbohydrate metabolic process"/>
    <property type="evidence" value="ECO:0007669"/>
    <property type="project" value="InterPro"/>
</dbReference>
<dbReference type="GO" id="GO:0046167">
    <property type="term" value="P:glycerol-3-phosphate biosynthetic process"/>
    <property type="evidence" value="ECO:0007669"/>
    <property type="project" value="UniProtKB-UniRule"/>
</dbReference>
<dbReference type="GO" id="GO:0046168">
    <property type="term" value="P:glycerol-3-phosphate catabolic process"/>
    <property type="evidence" value="ECO:0007669"/>
    <property type="project" value="InterPro"/>
</dbReference>
<dbReference type="GO" id="GO:0006650">
    <property type="term" value="P:glycerophospholipid metabolic process"/>
    <property type="evidence" value="ECO:0007669"/>
    <property type="project" value="UniProtKB-UniRule"/>
</dbReference>
<dbReference type="GO" id="GO:0008654">
    <property type="term" value="P:phospholipid biosynthetic process"/>
    <property type="evidence" value="ECO:0007669"/>
    <property type="project" value="UniProtKB-KW"/>
</dbReference>
<dbReference type="FunFam" id="1.10.1040.10:FF:000001">
    <property type="entry name" value="Glycerol-3-phosphate dehydrogenase [NAD(P)+]"/>
    <property type="match status" value="1"/>
</dbReference>
<dbReference type="FunFam" id="3.40.50.720:FF:000019">
    <property type="entry name" value="Glycerol-3-phosphate dehydrogenase [NAD(P)+]"/>
    <property type="match status" value="1"/>
</dbReference>
<dbReference type="Gene3D" id="1.10.1040.10">
    <property type="entry name" value="N-(1-d-carboxylethyl)-l-norvaline Dehydrogenase, domain 2"/>
    <property type="match status" value="1"/>
</dbReference>
<dbReference type="Gene3D" id="3.40.50.720">
    <property type="entry name" value="NAD(P)-binding Rossmann-like Domain"/>
    <property type="match status" value="1"/>
</dbReference>
<dbReference type="HAMAP" id="MF_00394">
    <property type="entry name" value="NAD_Glyc3P_dehydrog"/>
    <property type="match status" value="1"/>
</dbReference>
<dbReference type="InterPro" id="IPR008927">
    <property type="entry name" value="6-PGluconate_DH-like_C_sf"/>
</dbReference>
<dbReference type="InterPro" id="IPR013328">
    <property type="entry name" value="6PGD_dom2"/>
</dbReference>
<dbReference type="InterPro" id="IPR006168">
    <property type="entry name" value="G3P_DH_NAD-dep"/>
</dbReference>
<dbReference type="InterPro" id="IPR006109">
    <property type="entry name" value="G3P_DH_NAD-dep_C"/>
</dbReference>
<dbReference type="InterPro" id="IPR011128">
    <property type="entry name" value="G3P_DH_NAD-dep_N"/>
</dbReference>
<dbReference type="InterPro" id="IPR036291">
    <property type="entry name" value="NAD(P)-bd_dom_sf"/>
</dbReference>
<dbReference type="NCBIfam" id="NF000940">
    <property type="entry name" value="PRK00094.1-2"/>
    <property type="match status" value="1"/>
</dbReference>
<dbReference type="NCBIfam" id="NF000941">
    <property type="entry name" value="PRK00094.1-3"/>
    <property type="match status" value="1"/>
</dbReference>
<dbReference type="NCBIfam" id="NF000942">
    <property type="entry name" value="PRK00094.1-4"/>
    <property type="match status" value="1"/>
</dbReference>
<dbReference type="PANTHER" id="PTHR11728">
    <property type="entry name" value="GLYCEROL-3-PHOSPHATE DEHYDROGENASE"/>
    <property type="match status" value="1"/>
</dbReference>
<dbReference type="PANTHER" id="PTHR11728:SF1">
    <property type="entry name" value="GLYCEROL-3-PHOSPHATE DEHYDROGENASE [NAD(+)] 2, CHLOROPLASTIC"/>
    <property type="match status" value="1"/>
</dbReference>
<dbReference type="Pfam" id="PF07479">
    <property type="entry name" value="NAD_Gly3P_dh_C"/>
    <property type="match status" value="1"/>
</dbReference>
<dbReference type="Pfam" id="PF01210">
    <property type="entry name" value="NAD_Gly3P_dh_N"/>
    <property type="match status" value="1"/>
</dbReference>
<dbReference type="PIRSF" id="PIRSF000114">
    <property type="entry name" value="Glycerol-3-P_dh"/>
    <property type="match status" value="1"/>
</dbReference>
<dbReference type="PRINTS" id="PR00077">
    <property type="entry name" value="GPDHDRGNASE"/>
</dbReference>
<dbReference type="SUPFAM" id="SSF48179">
    <property type="entry name" value="6-phosphogluconate dehydrogenase C-terminal domain-like"/>
    <property type="match status" value="1"/>
</dbReference>
<dbReference type="SUPFAM" id="SSF51735">
    <property type="entry name" value="NAD(P)-binding Rossmann-fold domains"/>
    <property type="match status" value="1"/>
</dbReference>
<dbReference type="PROSITE" id="PS00957">
    <property type="entry name" value="NAD_G3PDH"/>
    <property type="match status" value="1"/>
</dbReference>